<organism>
    <name type="scientific">Mus musculus</name>
    <name type="common">Mouse</name>
    <dbReference type="NCBI Taxonomy" id="10090"/>
    <lineage>
        <taxon>Eukaryota</taxon>
        <taxon>Metazoa</taxon>
        <taxon>Chordata</taxon>
        <taxon>Craniata</taxon>
        <taxon>Vertebrata</taxon>
        <taxon>Euteleostomi</taxon>
        <taxon>Mammalia</taxon>
        <taxon>Eutheria</taxon>
        <taxon>Euarchontoglires</taxon>
        <taxon>Glires</taxon>
        <taxon>Rodentia</taxon>
        <taxon>Myomorpha</taxon>
        <taxon>Muroidea</taxon>
        <taxon>Muridae</taxon>
        <taxon>Murinae</taxon>
        <taxon>Mus</taxon>
        <taxon>Mus</taxon>
    </lineage>
</organism>
<name>PALD_MOUSE</name>
<comment type="subcellular location">
    <subcellularLocation>
        <location evidence="1">Cytoplasm</location>
        <location evidence="1">Cytosol</location>
    </subcellularLocation>
</comment>
<comment type="tissue specificity">
    <text evidence="3">Vascular expression detected in the central nervous system, kidney, lung, heart, skeletal muscle, white adipose tissue (WAT), brown adipose tissue, liver, pancreas and spleen. Not expressed in all vessels: for instance, not expressed in capillaries in the brain, and expressed mainly in large vessels in the heart, WAT, liver, pancreas and kidney. Predominant nonvascular expression in myocardium and lung mesenchyme. In large vessels, primarily expressed by smooth muscle cells, but occasionally detected at low levels in the endothelium. Expressed in various cells of the hematopoietic lineage.</text>
</comment>
<comment type="developmental stage">
    <text evidence="3">At 9.5 and 10.5 dpc, weak but general expression in the intersomitic mesenchyme. Higher levels of expression in the intersomitic vessels and other developing small and large blood vessels. Expressed in the notochord and the roof and floor plates of the neural tube. Expressed along rhombomeres 2 and 4, as well as pharyngeal arches 1 and 2, possibly in neural crest cells. No expression in the somites. At 14.5 dpc, predominantly expressed in all vessels, capillaries (at protein level), arteries and veins. Strong vascular expression observed in neural tissue, skeletal muscle, skin, kidney, liver, and along the gastrointestinal tract. Nonvascular expression detected in heart myocardium, lung and kidney mesenchyme (at protein level). During postnatal vascular development, expression shifts from capillary and venous vessels to arteries, from endothelial cells to vascular smooth muscle cells.</text>
</comment>
<comment type="similarity">
    <text evidence="4">Belongs to the paladin family.</text>
</comment>
<gene>
    <name type="primary">Pald1</name>
    <name type="synonym">Pald</name>
</gene>
<sequence>MGTTASTAQQTVSAGTSLEGLQGGSSSSMDSQHSLGGVQSFRATSLHNSKAKSIIPNKVAPVVITYNCKEEFQIHDELLKAHYRMGRLSDATPEHYLVQGRYFLVRDITEKMDILGTLKSCGAPNFRQVRGGLPVFGMGQPSLLGFRRVLQKLQTDGLKECIIFCVREEPVVFLRAEEDFVSYTPRDKESLHENLRDPSPGVKAENLELAIQKEIHDFAQLRDNVYHVYHNTEDLRGEPHTVAIRGEDGVCVTEEVFKRPLLLQPTYRYHHLPLPEQGPPLEAQFDAFVSVLRETPSLLPLRDNHGPLPALLFSCQSGVGRTNLGMVLGTLVMFHHSRTTSQLEAASPLAKPLPMEQFQVIQGFICKVPQGKKMVEEVDRAISACAELHDLKEEVLKNQRRLESFRPESRGQECGSQQAVQQRALWSLELYFYLLLFNYYLHEQYPLAFALSFSRWLCTHPELYRLLVELNSVGPLVPGDLIAKGSLEADDLVSLDALSTVREMDVANFRRVPRMPIYGTAQPSAKALGNILAYLSDAKRKLRQVVWIFLREEVVLECDGHTHSLWPPGPALAPEHLVALEAQLKAHLSAPVPNTKSPTAPRFQKCLTTQEVFSQHQGACLGLTYCRIPVPDFCAPREEDFDRLLEALRAALTKDPGTGFVFSCLSGQGRTTTAMVVAVLACWHIGGCPEVGEEELVSVPDAKFTKGEFQVVMKVVQLLPDGHHVKKEVDAALDIVSETMTPMHYHLREIIISTYRQAKATKEAQEAQRLQLRSLQYLERYIYLILFNAYLRLEKTSSWQRPFSTWMREVATKAGIYEILNQLGFPELESIEEQPLSRLRYRWQEQSRDPEPCDVGDFL</sequence>
<feature type="initiator methionine" description="Removed">
    <location>
        <position position="1"/>
    </location>
</feature>
<feature type="chain" id="PRO_0000286131" description="Paladin">
    <location>
        <begin position="2"/>
        <end position="859"/>
    </location>
</feature>
<feature type="region of interest" description="Disordered" evidence="2">
    <location>
        <begin position="1"/>
        <end position="34"/>
    </location>
</feature>
<feature type="modified residue" description="Phosphoserine" evidence="5">
    <location>
        <position position="89"/>
    </location>
</feature>
<feature type="lipid moiety-binding region" description="N-myristoyl glycine" evidence="1">
    <location>
        <position position="2"/>
    </location>
</feature>
<feature type="sequence conflict" description="In Ref. 2; BAC40433." evidence="4" ref="2">
    <original>L</original>
    <variation>F</variation>
    <location>
        <position position="262"/>
    </location>
</feature>
<feature type="sequence conflict" description="In Ref. 2; BAC40433." evidence="4" ref="2">
    <original>H</original>
    <variation>R</variation>
    <location>
        <position position="271"/>
    </location>
</feature>
<feature type="sequence conflict" description="In Ref. 2; BAC40433." evidence="4" ref="2">
    <original>P</original>
    <variation>A</variation>
    <location>
        <position position="279"/>
    </location>
</feature>
<feature type="sequence conflict" description="In Ref. 2; BAC40433." evidence="4" ref="2">
    <original>F</original>
    <variation>N</variation>
    <location>
        <position position="549"/>
    </location>
</feature>
<feature type="sequence conflict" description="In Ref. 2; BAC40433." evidence="4" ref="2">
    <original>V</original>
    <variation>E</variation>
    <location>
        <position position="578"/>
    </location>
</feature>
<accession>P70261</accession>
<accession>Q66JP9</accession>
<accession>Q8C2I4</accession>
<keyword id="KW-0963">Cytoplasm</keyword>
<keyword id="KW-0903">Direct protein sequencing</keyword>
<keyword id="KW-0449">Lipoprotein</keyword>
<keyword id="KW-0519">Myristate</keyword>
<keyword id="KW-0597">Phosphoprotein</keyword>
<keyword id="KW-1185">Reference proteome</keyword>
<protein>
    <recommendedName>
        <fullName>Paladin</fullName>
    </recommendedName>
</protein>
<proteinExistence type="evidence at protein level"/>
<reference key="1">
    <citation type="submission" date="1996-07" db="EMBL/GenBank/DDBJ databases">
        <title>A subtractive screen of mouse gastrulation.</title>
        <authorList>
            <person name="Pearce J.J.H."/>
            <person name="Davies T."/>
            <person name="Gardener R.L."/>
        </authorList>
    </citation>
    <scope>NUCLEOTIDE SEQUENCE [MRNA]</scope>
</reference>
<reference key="2">
    <citation type="journal article" date="2005" name="Science">
        <title>The transcriptional landscape of the mammalian genome.</title>
        <authorList>
            <person name="Carninci P."/>
            <person name="Kasukawa T."/>
            <person name="Katayama S."/>
            <person name="Gough J."/>
            <person name="Frith M.C."/>
            <person name="Maeda N."/>
            <person name="Oyama R."/>
            <person name="Ravasi T."/>
            <person name="Lenhard B."/>
            <person name="Wells C."/>
            <person name="Kodzius R."/>
            <person name="Shimokawa K."/>
            <person name="Bajic V.B."/>
            <person name="Brenner S.E."/>
            <person name="Batalov S."/>
            <person name="Forrest A.R."/>
            <person name="Zavolan M."/>
            <person name="Davis M.J."/>
            <person name="Wilming L.G."/>
            <person name="Aidinis V."/>
            <person name="Allen J.E."/>
            <person name="Ambesi-Impiombato A."/>
            <person name="Apweiler R."/>
            <person name="Aturaliya R.N."/>
            <person name="Bailey T.L."/>
            <person name="Bansal M."/>
            <person name="Baxter L."/>
            <person name="Beisel K.W."/>
            <person name="Bersano T."/>
            <person name="Bono H."/>
            <person name="Chalk A.M."/>
            <person name="Chiu K.P."/>
            <person name="Choudhary V."/>
            <person name="Christoffels A."/>
            <person name="Clutterbuck D.R."/>
            <person name="Crowe M.L."/>
            <person name="Dalla E."/>
            <person name="Dalrymple B.P."/>
            <person name="de Bono B."/>
            <person name="Della Gatta G."/>
            <person name="di Bernardo D."/>
            <person name="Down T."/>
            <person name="Engstrom P."/>
            <person name="Fagiolini M."/>
            <person name="Faulkner G."/>
            <person name="Fletcher C.F."/>
            <person name="Fukushima T."/>
            <person name="Furuno M."/>
            <person name="Futaki S."/>
            <person name="Gariboldi M."/>
            <person name="Georgii-Hemming P."/>
            <person name="Gingeras T.R."/>
            <person name="Gojobori T."/>
            <person name="Green R.E."/>
            <person name="Gustincich S."/>
            <person name="Harbers M."/>
            <person name="Hayashi Y."/>
            <person name="Hensch T.K."/>
            <person name="Hirokawa N."/>
            <person name="Hill D."/>
            <person name="Huminiecki L."/>
            <person name="Iacono M."/>
            <person name="Ikeo K."/>
            <person name="Iwama A."/>
            <person name="Ishikawa T."/>
            <person name="Jakt M."/>
            <person name="Kanapin A."/>
            <person name="Katoh M."/>
            <person name="Kawasawa Y."/>
            <person name="Kelso J."/>
            <person name="Kitamura H."/>
            <person name="Kitano H."/>
            <person name="Kollias G."/>
            <person name="Krishnan S.P."/>
            <person name="Kruger A."/>
            <person name="Kummerfeld S.K."/>
            <person name="Kurochkin I.V."/>
            <person name="Lareau L.F."/>
            <person name="Lazarevic D."/>
            <person name="Lipovich L."/>
            <person name="Liu J."/>
            <person name="Liuni S."/>
            <person name="McWilliam S."/>
            <person name="Madan Babu M."/>
            <person name="Madera M."/>
            <person name="Marchionni L."/>
            <person name="Matsuda H."/>
            <person name="Matsuzawa S."/>
            <person name="Miki H."/>
            <person name="Mignone F."/>
            <person name="Miyake S."/>
            <person name="Morris K."/>
            <person name="Mottagui-Tabar S."/>
            <person name="Mulder N."/>
            <person name="Nakano N."/>
            <person name="Nakauchi H."/>
            <person name="Ng P."/>
            <person name="Nilsson R."/>
            <person name="Nishiguchi S."/>
            <person name="Nishikawa S."/>
            <person name="Nori F."/>
            <person name="Ohara O."/>
            <person name="Okazaki Y."/>
            <person name="Orlando V."/>
            <person name="Pang K.C."/>
            <person name="Pavan W.J."/>
            <person name="Pavesi G."/>
            <person name="Pesole G."/>
            <person name="Petrovsky N."/>
            <person name="Piazza S."/>
            <person name="Reed J."/>
            <person name="Reid J.F."/>
            <person name="Ring B.Z."/>
            <person name="Ringwald M."/>
            <person name="Rost B."/>
            <person name="Ruan Y."/>
            <person name="Salzberg S.L."/>
            <person name="Sandelin A."/>
            <person name="Schneider C."/>
            <person name="Schoenbach C."/>
            <person name="Sekiguchi K."/>
            <person name="Semple C.A."/>
            <person name="Seno S."/>
            <person name="Sessa L."/>
            <person name="Sheng Y."/>
            <person name="Shibata Y."/>
            <person name="Shimada H."/>
            <person name="Shimada K."/>
            <person name="Silva D."/>
            <person name="Sinclair B."/>
            <person name="Sperling S."/>
            <person name="Stupka E."/>
            <person name="Sugiura K."/>
            <person name="Sultana R."/>
            <person name="Takenaka Y."/>
            <person name="Taki K."/>
            <person name="Tammoja K."/>
            <person name="Tan S.L."/>
            <person name="Tang S."/>
            <person name="Taylor M.S."/>
            <person name="Tegner J."/>
            <person name="Teichmann S.A."/>
            <person name="Ueda H.R."/>
            <person name="van Nimwegen E."/>
            <person name="Verardo R."/>
            <person name="Wei C.L."/>
            <person name="Yagi K."/>
            <person name="Yamanishi H."/>
            <person name="Zabarovsky E."/>
            <person name="Zhu S."/>
            <person name="Zimmer A."/>
            <person name="Hide W."/>
            <person name="Bult C."/>
            <person name="Grimmond S.M."/>
            <person name="Teasdale R.D."/>
            <person name="Liu E.T."/>
            <person name="Brusic V."/>
            <person name="Quackenbush J."/>
            <person name="Wahlestedt C."/>
            <person name="Mattick J.S."/>
            <person name="Hume D.A."/>
            <person name="Kai C."/>
            <person name="Sasaki D."/>
            <person name="Tomaru Y."/>
            <person name="Fukuda S."/>
            <person name="Kanamori-Katayama M."/>
            <person name="Suzuki M."/>
            <person name="Aoki J."/>
            <person name="Arakawa T."/>
            <person name="Iida J."/>
            <person name="Imamura K."/>
            <person name="Itoh M."/>
            <person name="Kato T."/>
            <person name="Kawaji H."/>
            <person name="Kawagashira N."/>
            <person name="Kawashima T."/>
            <person name="Kojima M."/>
            <person name="Kondo S."/>
            <person name="Konno H."/>
            <person name="Nakano K."/>
            <person name="Ninomiya N."/>
            <person name="Nishio T."/>
            <person name="Okada M."/>
            <person name="Plessy C."/>
            <person name="Shibata K."/>
            <person name="Shiraki T."/>
            <person name="Suzuki S."/>
            <person name="Tagami M."/>
            <person name="Waki K."/>
            <person name="Watahiki A."/>
            <person name="Okamura-Oho Y."/>
            <person name="Suzuki H."/>
            <person name="Kawai J."/>
            <person name="Hayashizaki Y."/>
        </authorList>
    </citation>
    <scope>NUCLEOTIDE SEQUENCE [LARGE SCALE MRNA]</scope>
    <source>
        <strain>NOD</strain>
        <tissue>Thymus</tissue>
    </source>
</reference>
<reference key="3">
    <citation type="journal article" date="2004" name="Genome Res.">
        <title>The status, quality, and expansion of the NIH full-length cDNA project: the Mammalian Gene Collection (MGC).</title>
        <authorList>
            <consortium name="The MGC Project Team"/>
        </authorList>
    </citation>
    <scope>NUCLEOTIDE SEQUENCE [LARGE SCALE MRNA] OF 1-257</scope>
    <source>
        <strain>C57BL/6J</strain>
        <tissue>Embryo</tissue>
        <tissue>Kidney</tissue>
    </source>
</reference>
<reference key="4">
    <citation type="submission" date="2009-01" db="UniProtKB">
        <authorList>
            <person name="Lubec G."/>
            <person name="Sunyer B."/>
            <person name="Chen W.-Q."/>
        </authorList>
    </citation>
    <scope>PROTEIN SEQUENCE OF 51-58</scope>
    <scope>IDENTIFICATION BY MASS SPECTROMETRY</scope>
    <source>
        <strain>OF1</strain>
        <tissue>Hippocampus</tissue>
    </source>
</reference>
<reference key="5">
    <citation type="journal article" date="2010" name="Cell">
        <title>A tissue-specific atlas of mouse protein phosphorylation and expression.</title>
        <authorList>
            <person name="Huttlin E.L."/>
            <person name="Jedrychowski M.P."/>
            <person name="Elias J.E."/>
            <person name="Goswami T."/>
            <person name="Rad R."/>
            <person name="Beausoleil S.A."/>
            <person name="Villen J."/>
            <person name="Haas W."/>
            <person name="Sowa M.E."/>
            <person name="Gygi S.P."/>
        </authorList>
    </citation>
    <scope>PHOSPHORYLATION [LARGE SCALE ANALYSIS] AT SER-89</scope>
    <scope>IDENTIFICATION BY MASS SPECTROMETRY [LARGE SCALE ANALYSIS]</scope>
    <source>
        <tissue>Brown adipose tissue</tissue>
        <tissue>Heart</tissue>
        <tissue>Kidney</tissue>
        <tissue>Liver</tissue>
        <tissue>Lung</tissue>
        <tissue>Spleen</tissue>
        <tissue>Testis</tissue>
    </source>
</reference>
<reference key="6">
    <citation type="journal article" date="2012" name="Dev. Dyn.">
        <title>Paladin (X99384) is expressed in the vasculature and shifts from endothelial to vascular smooth muscle cells during mouse development.</title>
        <authorList>
            <person name="Wallgard E."/>
            <person name="Nitzsche A."/>
            <person name="Larsson J."/>
            <person name="Guo X."/>
            <person name="Dieterich L.C."/>
            <person name="Dimberg A."/>
            <person name="Olofsson T."/>
            <person name="Ponten F.C."/>
            <person name="Makinen T."/>
            <person name="Kalen M."/>
            <person name="Hellstrom M."/>
        </authorList>
    </citation>
    <scope>TISSUE SPECIFICITY</scope>
    <scope>DEVELOPMENTAL STAGE</scope>
</reference>
<dbReference type="EMBL" id="X99384">
    <property type="protein sequence ID" value="CAA67763.1"/>
    <property type="molecule type" value="mRNA"/>
</dbReference>
<dbReference type="EMBL" id="AK088577">
    <property type="protein sequence ID" value="BAC40433.1"/>
    <property type="molecule type" value="mRNA"/>
</dbReference>
<dbReference type="EMBL" id="BC080827">
    <property type="protein sequence ID" value="AAH80827.1"/>
    <property type="molecule type" value="mRNA"/>
</dbReference>
<dbReference type="EMBL" id="BC099531">
    <property type="protein sequence ID" value="AAH99531.1"/>
    <property type="molecule type" value="mRNA"/>
</dbReference>
<dbReference type="CCDS" id="CCDS23877.1"/>
<dbReference type="RefSeq" id="NP_038781.2">
    <property type="nucleotide sequence ID" value="NM_013753.2"/>
</dbReference>
<dbReference type="BioGRID" id="205164">
    <property type="interactions" value="1"/>
</dbReference>
<dbReference type="FunCoup" id="P70261">
    <property type="interactions" value="280"/>
</dbReference>
<dbReference type="STRING" id="10090.ENSMUSP00000020289"/>
<dbReference type="iPTMnet" id="P70261"/>
<dbReference type="PhosphoSitePlus" id="P70261"/>
<dbReference type="SwissPalm" id="P70261"/>
<dbReference type="PaxDb" id="10090-ENSMUSP00000020289"/>
<dbReference type="PeptideAtlas" id="P70261"/>
<dbReference type="ProteomicsDB" id="294153"/>
<dbReference type="Pumba" id="P70261"/>
<dbReference type="DNASU" id="27355"/>
<dbReference type="GeneID" id="27355"/>
<dbReference type="KEGG" id="mmu:27355"/>
<dbReference type="AGR" id="MGI:1351623"/>
<dbReference type="CTD" id="27143"/>
<dbReference type="MGI" id="MGI:1351623">
    <property type="gene designation" value="Pald1"/>
</dbReference>
<dbReference type="eggNOG" id="ENOG502QQ90">
    <property type="taxonomic scope" value="Eukaryota"/>
</dbReference>
<dbReference type="InParanoid" id="P70261"/>
<dbReference type="OrthoDB" id="66369at2759"/>
<dbReference type="PhylomeDB" id="P70261"/>
<dbReference type="TreeFam" id="TF332292"/>
<dbReference type="BioGRID-ORCS" id="27355">
    <property type="hits" value="2 hits in 79 CRISPR screens"/>
</dbReference>
<dbReference type="ChiTaRS" id="Pald1">
    <property type="organism name" value="mouse"/>
</dbReference>
<dbReference type="PRO" id="PR:P70261"/>
<dbReference type="Proteomes" id="UP000000589">
    <property type="component" value="Unplaced"/>
</dbReference>
<dbReference type="RNAct" id="P70261">
    <property type="molecule type" value="protein"/>
</dbReference>
<dbReference type="GO" id="GO:0005829">
    <property type="term" value="C:cytosol"/>
    <property type="evidence" value="ECO:0000266"/>
    <property type="project" value="MGI"/>
</dbReference>
<dbReference type="CDD" id="cd17659">
    <property type="entry name" value="PTP_paladin_1"/>
    <property type="match status" value="1"/>
</dbReference>
<dbReference type="CDD" id="cd17660">
    <property type="entry name" value="PTP_paladin_2"/>
    <property type="match status" value="1"/>
</dbReference>
<dbReference type="FunFam" id="3.90.190.10:FF:000091">
    <property type="entry name" value="Phosphatase domain containing paladin 1"/>
    <property type="match status" value="1"/>
</dbReference>
<dbReference type="Gene3D" id="3.90.190.10">
    <property type="entry name" value="Protein tyrosine phosphatase superfamily"/>
    <property type="match status" value="2"/>
</dbReference>
<dbReference type="InterPro" id="IPR029021">
    <property type="entry name" value="Prot-tyrosine_phosphatase-like"/>
</dbReference>
<dbReference type="InterPro" id="IPR050561">
    <property type="entry name" value="PTP"/>
</dbReference>
<dbReference type="InterPro" id="IPR003595">
    <property type="entry name" value="Tyr_Pase_cat"/>
</dbReference>
<dbReference type="PANTHER" id="PTHR23339">
    <property type="entry name" value="TYROSINE SPECIFIC PROTEIN PHOSPHATASE AND DUAL SPECIFICITY PROTEIN PHOSPHATASE"/>
    <property type="match status" value="1"/>
</dbReference>
<dbReference type="Pfam" id="PF14566">
    <property type="entry name" value="PTPlike_phytase"/>
    <property type="match status" value="2"/>
</dbReference>
<dbReference type="SMART" id="SM00404">
    <property type="entry name" value="PTPc_motif"/>
    <property type="match status" value="1"/>
</dbReference>
<dbReference type="SMART" id="SM01301">
    <property type="entry name" value="PTPlike_phytase"/>
    <property type="match status" value="2"/>
</dbReference>
<dbReference type="SUPFAM" id="SSF52799">
    <property type="entry name" value="(Phosphotyrosine protein) phosphatases II"/>
    <property type="match status" value="2"/>
</dbReference>
<evidence type="ECO:0000250" key="1"/>
<evidence type="ECO:0000256" key="2">
    <source>
        <dbReference type="SAM" id="MobiDB-lite"/>
    </source>
</evidence>
<evidence type="ECO:0000269" key="3">
    <source>
    </source>
</evidence>
<evidence type="ECO:0000305" key="4"/>
<evidence type="ECO:0007744" key="5">
    <source>
    </source>
</evidence>